<dbReference type="EMBL" id="JF432079">
    <property type="protein sequence ID" value="AET43456.1"/>
    <property type="molecule type" value="Genomic_DNA"/>
</dbReference>
<dbReference type="SMR" id="M1ETK3"/>
<dbReference type="GO" id="GO:0005634">
    <property type="term" value="C:nucleus"/>
    <property type="evidence" value="ECO:0007669"/>
    <property type="project" value="UniProtKB-SubCell"/>
</dbReference>
<dbReference type="GO" id="GO:0003677">
    <property type="term" value="F:DNA binding"/>
    <property type="evidence" value="ECO:0007669"/>
    <property type="project" value="UniProtKB-KW"/>
</dbReference>
<dbReference type="CDD" id="cd00167">
    <property type="entry name" value="SANT"/>
    <property type="match status" value="2"/>
</dbReference>
<dbReference type="FunFam" id="1.10.10.60:FF:000218">
    <property type="entry name" value="Myb transcription factor"/>
    <property type="match status" value="1"/>
</dbReference>
<dbReference type="Gene3D" id="1.10.10.60">
    <property type="entry name" value="Homeodomain-like"/>
    <property type="match status" value="2"/>
</dbReference>
<dbReference type="InterPro" id="IPR009057">
    <property type="entry name" value="Homeodomain-like_sf"/>
</dbReference>
<dbReference type="InterPro" id="IPR017930">
    <property type="entry name" value="Myb_dom"/>
</dbReference>
<dbReference type="InterPro" id="IPR015495">
    <property type="entry name" value="Myb_TF_plants"/>
</dbReference>
<dbReference type="InterPro" id="IPR001005">
    <property type="entry name" value="SANT/Myb"/>
</dbReference>
<dbReference type="PANTHER" id="PTHR47999">
    <property type="entry name" value="TRANSCRIPTION FACTOR MYB8-RELATED-RELATED"/>
    <property type="match status" value="1"/>
</dbReference>
<dbReference type="PANTHER" id="PTHR47999:SF24">
    <property type="entry name" value="TRANSCRIPTION FACTOR MYB90"/>
    <property type="match status" value="1"/>
</dbReference>
<dbReference type="Pfam" id="PF00249">
    <property type="entry name" value="Myb_DNA-binding"/>
    <property type="match status" value="2"/>
</dbReference>
<dbReference type="SMART" id="SM00717">
    <property type="entry name" value="SANT"/>
    <property type="match status" value="2"/>
</dbReference>
<dbReference type="SUPFAM" id="SSF46689">
    <property type="entry name" value="Homeodomain-like"/>
    <property type="match status" value="1"/>
</dbReference>
<dbReference type="PROSITE" id="PS51294">
    <property type="entry name" value="HTH_MYB"/>
    <property type="match status" value="2"/>
</dbReference>
<keyword id="KW-0010">Activator</keyword>
<keyword id="KW-0238">DNA-binding</keyword>
<keyword id="KW-0539">Nucleus</keyword>
<keyword id="KW-0677">Repeat</keyword>
<keyword id="KW-0804">Transcription</keyword>
<keyword id="KW-0805">Transcription regulation</keyword>
<name>MYB1W_BETVU</name>
<sequence>MYQNSEAGSLGRVVKGSWSDEEDDLLRKCIQKYGEGNWKRVPERAGLNRCRKSCRWRWLNYLKPSIKRGHFNEDEVKFIIQQHKLLGNRWSLIAAKLPGRTINDVKNYCNTHLYKKHSIENIPAPATNTMTHNTSSCVERPESSAAIKEPTWWENILVELQREEKEGKSQNCSGLDFEQDNLGQQDPNINDGMDQWLNSLREVPNLSYQWEENLLDFDVVNLWA</sequence>
<evidence type="ECO:0000255" key="1">
    <source>
        <dbReference type="PROSITE-ProRule" id="PRU00625"/>
    </source>
</evidence>
<evidence type="ECO:0000303" key="2">
    <source>
    </source>
</evidence>
<evidence type="ECO:0000303" key="3">
    <source>
    </source>
</evidence>
<evidence type="ECO:0000305" key="4">
    <source>
    </source>
</evidence>
<evidence type="ECO:0000312" key="5">
    <source>
        <dbReference type="EMBL" id="AET43456.1"/>
    </source>
</evidence>
<protein>
    <recommendedName>
        <fullName evidence="3">Transcription factor MYB1</fullName>
        <shortName evidence="3">BvMYB1</shortName>
    </recommendedName>
    <alternativeName>
        <fullName evidence="3">Anthocyanin MYB-like protein 1</fullName>
    </alternativeName>
    <alternativeName>
        <fullName evidence="3">R2R3 MYB transcriptional regulator 1</fullName>
    </alternativeName>
</protein>
<organism evidence="5">
    <name type="scientific">Beta vulgaris</name>
    <name type="common">Sugar beet</name>
    <dbReference type="NCBI Taxonomy" id="161934"/>
    <lineage>
        <taxon>Eukaryota</taxon>
        <taxon>Viridiplantae</taxon>
        <taxon>Streptophyta</taxon>
        <taxon>Embryophyta</taxon>
        <taxon>Tracheophyta</taxon>
        <taxon>Spermatophyta</taxon>
        <taxon>Magnoliopsida</taxon>
        <taxon>eudicotyledons</taxon>
        <taxon>Gunneridae</taxon>
        <taxon>Pentapetalae</taxon>
        <taxon>Caryophyllales</taxon>
        <taxon>Chenopodiaceae</taxon>
        <taxon>Betoideae</taxon>
        <taxon>Beta</taxon>
    </lineage>
</organism>
<comment type="function">
    <text evidence="4">Activates DODA1 and CYP76AD1 in the betalain red pigment pathway.</text>
</comment>
<comment type="subcellular location">
    <subcellularLocation>
        <location evidence="1">Nucleus</location>
    </subcellularLocation>
</comment>
<comment type="induction">
    <text evidence="4">This recessive y allele is expressed at low levels, resulting in an inner white flesh of the beet. However, yy plants still can make pigments but never make as much of it or have it in the same location as YY or Yy plants with an inner red flesh.</text>
</comment>
<accession>M1ETK3</accession>
<proteinExistence type="evidence at transcript level"/>
<gene>
    <name evidence="3" type="primary">MYB1</name>
    <name evidence="2" type="synonym">Bv2g027795_jkkr</name>
    <name evidence="2" type="synonym">Bv_jkkr</name>
</gene>
<feature type="chain" id="PRO_0000431980" description="Transcription factor MYB1">
    <location>
        <begin position="1"/>
        <end position="224"/>
    </location>
</feature>
<feature type="domain" description="HTH myb-type 1" evidence="1">
    <location>
        <begin position="10"/>
        <end position="66"/>
    </location>
</feature>
<feature type="domain" description="HTH myb-type 2" evidence="1">
    <location>
        <begin position="67"/>
        <end position="117"/>
    </location>
</feature>
<feature type="DNA-binding region" description="H-T-H motif" evidence="1">
    <location>
        <begin position="38"/>
        <end position="62"/>
    </location>
</feature>
<feature type="DNA-binding region" description="H-T-H motif" evidence="1">
    <location>
        <begin position="90"/>
        <end position="113"/>
    </location>
</feature>
<reference key="1">
    <citation type="journal article" date="2004" name="Plant Mol. Biol. Rep.">
        <title>Construction of a Sugar Beet BAC Library from a Hybrid with Diverse Traits.</title>
        <authorList>
            <person name="McGrath J.M."/>
            <person name="Shaw R.S."/>
            <person name="de los Reyes B.G."/>
            <person name="Weiland J.J."/>
        </authorList>
    </citation>
    <scope>NUCLEOTIDE SEQUENCE [GENOMIC DNA]</scope>
    <source>
        <strain>cv. US H20</strain>
    </source>
</reference>
<reference key="2">
    <citation type="journal article" date="2014" name="BMC Plant Biol.">
        <title>Genome-wide identification and characterisation of R2R3-MYB genes in sugar beet (Beta vulgaris).</title>
        <authorList>
            <person name="Stracke R."/>
            <person name="Holtgrawe D."/>
            <person name="Schneider J."/>
            <person name="Pucker B."/>
            <person name="Rosleff Sorensen T."/>
            <person name="Weisshaar B."/>
        </authorList>
    </citation>
    <scope>GENE FAMILY</scope>
    <scope>NOMENCLATURE</scope>
    <source>
        <strain>cv. KWS2320</strain>
    </source>
</reference>
<reference key="3">
    <citation type="journal article" date="2015" name="Nat. Genet.">
        <title>The beet Y locus encodes an anthocyanin MYB-like protein that activates the betalain red pigment pathway.</title>
        <authorList>
            <person name="Hatlestad G.J."/>
            <person name="Akhavan N.A."/>
            <person name="Sunnadeniya R.M."/>
            <person name="Elam L."/>
            <person name="Cargile S."/>
            <person name="Hembd A."/>
            <person name="Gonzalez A."/>
            <person name="McGrath J.M."/>
            <person name="Lloyd A.M."/>
        </authorList>
    </citation>
    <scope>NUCLEOTIDE SEQUENCE [GENOMIC DNA]</scope>
    <scope>FUNCTION</scope>
    <scope>INDUCTION</scope>
    <source>
        <strain>cv. C869</strain>
    </source>
</reference>